<sequence>MQIIVKNISYIYNRKTALALKALDDSSCIINQGEHVAIIGSTGSGKTTFIEHLNALLIPETGTINWIFENEHKKTKEKYLEDVVLKRTYFKKVKKAKDIRRRIGVVFQFAEYQIFEETIEKDIMFGPRSYGVSKEEAKQRAAKYLEMVGLPLEFLEKNPFGLSGGQKRRVALAGILAIEPDFLVLDEPTAGLDPQGVKDILDIFDNINKNGKTVIMVTHDLDNVLERTKRTLVFDKGKLIRDAGTYEILKDEKFLVENKLKSPKLITFVNKLEQRGIFLKPVTSIDKLAIELNIYLRNKQQSNE</sequence>
<reference key="1">
    <citation type="journal article" date="2001" name="Nucleic Acids Res.">
        <title>The complete genome sequence of the murine respiratory pathogen Mycoplasma pulmonis.</title>
        <authorList>
            <person name="Chambaud I."/>
            <person name="Heilig R."/>
            <person name="Ferris S."/>
            <person name="Barbe V."/>
            <person name="Samson D."/>
            <person name="Galisson F."/>
            <person name="Moszer I."/>
            <person name="Dybvig K."/>
            <person name="Wroblewski H."/>
            <person name="Viari A."/>
            <person name="Rocha E.P.C."/>
            <person name="Blanchard A."/>
        </authorList>
    </citation>
    <scope>NUCLEOTIDE SEQUENCE [LARGE SCALE GENOMIC DNA]</scope>
    <source>
        <strain>UAB CTIP</strain>
    </source>
</reference>
<evidence type="ECO:0000255" key="1">
    <source>
        <dbReference type="HAMAP-Rule" id="MF_01710"/>
    </source>
</evidence>
<accession>Q98QH4</accession>
<comment type="function">
    <text evidence="1">ATP-binding (A) component of a common energy-coupling factor (ECF) ABC-transporter complex. Unlike classic ABC transporters this ECF transporter provides the energy necessary to transport a number of different substrates.</text>
</comment>
<comment type="subunit">
    <text evidence="1">Forms a stable energy-coupling factor (ECF) transporter complex composed of 2 membrane-embedded substrate-binding proteins (S component), 2 ATP-binding proteins (A component) and 2 transmembrane proteins (T component).</text>
</comment>
<comment type="subcellular location">
    <subcellularLocation>
        <location evidence="1">Cell membrane</location>
        <topology evidence="1">Peripheral membrane protein</topology>
    </subcellularLocation>
</comment>
<comment type="similarity">
    <text evidence="1">Belongs to the ABC transporter superfamily. Energy-coupling factor EcfA family.</text>
</comment>
<feature type="chain" id="PRO_0000092048" description="Energy-coupling factor transporter ATP-binding protein EcfA2">
    <location>
        <begin position="1"/>
        <end position="304"/>
    </location>
</feature>
<feature type="domain" description="ABC transporter" evidence="1">
    <location>
        <begin position="3"/>
        <end position="261"/>
    </location>
</feature>
<feature type="binding site" evidence="1">
    <location>
        <begin position="40"/>
        <end position="47"/>
    </location>
    <ligand>
        <name>ATP</name>
        <dbReference type="ChEBI" id="CHEBI:30616"/>
    </ligand>
</feature>
<name>ECFA2_MYCPU</name>
<protein>
    <recommendedName>
        <fullName evidence="1">Energy-coupling factor transporter ATP-binding protein EcfA2</fullName>
        <shortName evidence="1">ECF transporter A component EcfA2</shortName>
        <ecNumber evidence="1">7.-.-.-</ecNumber>
    </recommendedName>
</protein>
<dbReference type="EC" id="7.-.-.-" evidence="1"/>
<dbReference type="EMBL" id="AL445564">
    <property type="protein sequence ID" value="CAC13560.1"/>
    <property type="molecule type" value="Genomic_DNA"/>
</dbReference>
<dbReference type="PIR" id="C90560">
    <property type="entry name" value="C90560"/>
</dbReference>
<dbReference type="RefSeq" id="WP_010925191.1">
    <property type="nucleotide sequence ID" value="NC_002771.1"/>
</dbReference>
<dbReference type="SMR" id="Q98QH4"/>
<dbReference type="STRING" id="272635.gene:17576987"/>
<dbReference type="KEGG" id="mpu:MYPU_3870"/>
<dbReference type="eggNOG" id="COG1122">
    <property type="taxonomic scope" value="Bacteria"/>
</dbReference>
<dbReference type="HOGENOM" id="CLU_000604_1_22_14"/>
<dbReference type="BioCyc" id="MPUL272635:G1GT6-394-MONOMER"/>
<dbReference type="Proteomes" id="UP000000528">
    <property type="component" value="Chromosome"/>
</dbReference>
<dbReference type="GO" id="GO:0043190">
    <property type="term" value="C:ATP-binding cassette (ABC) transporter complex"/>
    <property type="evidence" value="ECO:0007669"/>
    <property type="project" value="TreeGrafter"/>
</dbReference>
<dbReference type="GO" id="GO:0005524">
    <property type="term" value="F:ATP binding"/>
    <property type="evidence" value="ECO:0007669"/>
    <property type="project" value="UniProtKB-KW"/>
</dbReference>
<dbReference type="GO" id="GO:0016887">
    <property type="term" value="F:ATP hydrolysis activity"/>
    <property type="evidence" value="ECO:0007669"/>
    <property type="project" value="InterPro"/>
</dbReference>
<dbReference type="GO" id="GO:0042626">
    <property type="term" value="F:ATPase-coupled transmembrane transporter activity"/>
    <property type="evidence" value="ECO:0007669"/>
    <property type="project" value="TreeGrafter"/>
</dbReference>
<dbReference type="CDD" id="cd03225">
    <property type="entry name" value="ABC_cobalt_CbiO_domain1"/>
    <property type="match status" value="1"/>
</dbReference>
<dbReference type="FunFam" id="3.40.50.300:FF:000224">
    <property type="entry name" value="Energy-coupling factor transporter ATP-binding protein EcfA"/>
    <property type="match status" value="1"/>
</dbReference>
<dbReference type="Gene3D" id="3.40.50.300">
    <property type="entry name" value="P-loop containing nucleotide triphosphate hydrolases"/>
    <property type="match status" value="1"/>
</dbReference>
<dbReference type="InterPro" id="IPR003593">
    <property type="entry name" value="AAA+_ATPase"/>
</dbReference>
<dbReference type="InterPro" id="IPR003439">
    <property type="entry name" value="ABC_transporter-like_ATP-bd"/>
</dbReference>
<dbReference type="InterPro" id="IPR017871">
    <property type="entry name" value="ABC_transporter-like_CS"/>
</dbReference>
<dbReference type="InterPro" id="IPR015856">
    <property type="entry name" value="ABC_transpr_CbiO/EcfA_su"/>
</dbReference>
<dbReference type="InterPro" id="IPR050095">
    <property type="entry name" value="ECF_ABC_transporter_ATP-bd"/>
</dbReference>
<dbReference type="InterPro" id="IPR030946">
    <property type="entry name" value="EcfA2"/>
</dbReference>
<dbReference type="InterPro" id="IPR027417">
    <property type="entry name" value="P-loop_NTPase"/>
</dbReference>
<dbReference type="NCBIfam" id="TIGR04521">
    <property type="entry name" value="ECF_ATPase_2"/>
    <property type="match status" value="1"/>
</dbReference>
<dbReference type="NCBIfam" id="NF010170">
    <property type="entry name" value="PRK13651.1"/>
    <property type="match status" value="1"/>
</dbReference>
<dbReference type="PANTHER" id="PTHR43553:SF27">
    <property type="entry name" value="ENERGY-COUPLING FACTOR TRANSPORTER ATP-BINDING PROTEIN ECFA2"/>
    <property type="match status" value="1"/>
</dbReference>
<dbReference type="PANTHER" id="PTHR43553">
    <property type="entry name" value="HEAVY METAL TRANSPORTER"/>
    <property type="match status" value="1"/>
</dbReference>
<dbReference type="Pfam" id="PF00005">
    <property type="entry name" value="ABC_tran"/>
    <property type="match status" value="1"/>
</dbReference>
<dbReference type="SMART" id="SM00382">
    <property type="entry name" value="AAA"/>
    <property type="match status" value="1"/>
</dbReference>
<dbReference type="SUPFAM" id="SSF52540">
    <property type="entry name" value="P-loop containing nucleoside triphosphate hydrolases"/>
    <property type="match status" value="1"/>
</dbReference>
<dbReference type="PROSITE" id="PS00211">
    <property type="entry name" value="ABC_TRANSPORTER_1"/>
    <property type="match status" value="1"/>
</dbReference>
<dbReference type="PROSITE" id="PS50893">
    <property type="entry name" value="ABC_TRANSPORTER_2"/>
    <property type="match status" value="1"/>
</dbReference>
<dbReference type="PROSITE" id="PS51246">
    <property type="entry name" value="CBIO"/>
    <property type="match status" value="1"/>
</dbReference>
<proteinExistence type="inferred from homology"/>
<organism>
    <name type="scientific">Mycoplasmopsis pulmonis (strain UAB CTIP)</name>
    <name type="common">Mycoplasma pulmonis</name>
    <dbReference type="NCBI Taxonomy" id="272635"/>
    <lineage>
        <taxon>Bacteria</taxon>
        <taxon>Bacillati</taxon>
        <taxon>Mycoplasmatota</taxon>
        <taxon>Mycoplasmoidales</taxon>
        <taxon>Metamycoplasmataceae</taxon>
        <taxon>Mycoplasmopsis</taxon>
    </lineage>
</organism>
<keyword id="KW-0067">ATP-binding</keyword>
<keyword id="KW-1003">Cell membrane</keyword>
<keyword id="KW-0472">Membrane</keyword>
<keyword id="KW-0547">Nucleotide-binding</keyword>
<keyword id="KW-1185">Reference proteome</keyword>
<keyword id="KW-1278">Translocase</keyword>
<keyword id="KW-0813">Transport</keyword>
<gene>
    <name evidence="1" type="primary">ecfA2</name>
    <name type="synonym">cbiO2</name>
    <name type="ordered locus">MYPU_3870</name>
</gene>